<evidence type="ECO:0000255" key="1">
    <source>
        <dbReference type="HAMAP-Rule" id="MF_01062"/>
    </source>
</evidence>
<gene>
    <name evidence="1" type="primary">ppsR</name>
    <name type="ordered locus">STY1762</name>
    <name type="ordered locus">t1229</name>
</gene>
<dbReference type="EC" id="2.7.11.33" evidence="1"/>
<dbReference type="EC" id="2.7.4.28" evidence="1"/>
<dbReference type="EMBL" id="AL513382">
    <property type="protein sequence ID" value="CAD02004.1"/>
    <property type="molecule type" value="Genomic_DNA"/>
</dbReference>
<dbReference type="EMBL" id="AE014613">
    <property type="protein sequence ID" value="AAO68884.1"/>
    <property type="molecule type" value="Genomic_DNA"/>
</dbReference>
<dbReference type="RefSeq" id="NP_456163.1">
    <property type="nucleotide sequence ID" value="NC_003198.1"/>
</dbReference>
<dbReference type="RefSeq" id="WP_000370992.1">
    <property type="nucleotide sequence ID" value="NZ_WSUR01000011.1"/>
</dbReference>
<dbReference type="SMR" id="P67198"/>
<dbReference type="STRING" id="220341.gene:17585696"/>
<dbReference type="KEGG" id="stt:t1229"/>
<dbReference type="KEGG" id="sty:STY1762"/>
<dbReference type="PATRIC" id="fig|220341.7.peg.1774"/>
<dbReference type="eggNOG" id="COG1806">
    <property type="taxonomic scope" value="Bacteria"/>
</dbReference>
<dbReference type="HOGENOM" id="CLU_046206_1_0_6"/>
<dbReference type="OMA" id="YAQCEFE"/>
<dbReference type="OrthoDB" id="9782201at2"/>
<dbReference type="Proteomes" id="UP000000541">
    <property type="component" value="Chromosome"/>
</dbReference>
<dbReference type="Proteomes" id="UP000002670">
    <property type="component" value="Chromosome"/>
</dbReference>
<dbReference type="GO" id="GO:0043531">
    <property type="term" value="F:ADP binding"/>
    <property type="evidence" value="ECO:0007669"/>
    <property type="project" value="UniProtKB-UniRule"/>
</dbReference>
<dbReference type="GO" id="GO:0005524">
    <property type="term" value="F:ATP binding"/>
    <property type="evidence" value="ECO:0007669"/>
    <property type="project" value="InterPro"/>
</dbReference>
<dbReference type="GO" id="GO:0016776">
    <property type="term" value="F:phosphotransferase activity, phosphate group as acceptor"/>
    <property type="evidence" value="ECO:0007669"/>
    <property type="project" value="UniProtKB-UniRule"/>
</dbReference>
<dbReference type="GO" id="GO:0004674">
    <property type="term" value="F:protein serine/threonine kinase activity"/>
    <property type="evidence" value="ECO:0007669"/>
    <property type="project" value="UniProtKB-UniRule"/>
</dbReference>
<dbReference type="HAMAP" id="MF_01062">
    <property type="entry name" value="PSRP"/>
    <property type="match status" value="1"/>
</dbReference>
<dbReference type="InterPro" id="IPR005177">
    <property type="entry name" value="Kinase-pyrophosphorylase"/>
</dbReference>
<dbReference type="InterPro" id="IPR026530">
    <property type="entry name" value="PSRP"/>
</dbReference>
<dbReference type="NCBIfam" id="NF003742">
    <property type="entry name" value="PRK05339.1"/>
    <property type="match status" value="1"/>
</dbReference>
<dbReference type="PANTHER" id="PTHR31756">
    <property type="entry name" value="PYRUVATE, PHOSPHATE DIKINASE REGULATORY PROTEIN 1, CHLOROPLASTIC"/>
    <property type="match status" value="1"/>
</dbReference>
<dbReference type="PANTHER" id="PTHR31756:SF3">
    <property type="entry name" value="PYRUVATE, PHOSPHATE DIKINASE REGULATORY PROTEIN 1, CHLOROPLASTIC"/>
    <property type="match status" value="1"/>
</dbReference>
<dbReference type="Pfam" id="PF03618">
    <property type="entry name" value="Kinase-PPPase"/>
    <property type="match status" value="1"/>
</dbReference>
<comment type="function">
    <text evidence="1">Bifunctional serine/threonine kinase and phosphorylase involved in the regulation of the phosphoenolpyruvate synthase (PEPS) by catalyzing its phosphorylation/dephosphorylation.</text>
</comment>
<comment type="catalytic activity">
    <reaction evidence="1">
        <text>[pyruvate, water dikinase] + ADP = [pyruvate, water dikinase]-phosphate + AMP + H(+)</text>
        <dbReference type="Rhea" id="RHEA:46020"/>
        <dbReference type="Rhea" id="RHEA-COMP:11425"/>
        <dbReference type="Rhea" id="RHEA-COMP:11426"/>
        <dbReference type="ChEBI" id="CHEBI:15378"/>
        <dbReference type="ChEBI" id="CHEBI:43176"/>
        <dbReference type="ChEBI" id="CHEBI:68546"/>
        <dbReference type="ChEBI" id="CHEBI:456215"/>
        <dbReference type="ChEBI" id="CHEBI:456216"/>
        <dbReference type="EC" id="2.7.11.33"/>
    </reaction>
</comment>
<comment type="catalytic activity">
    <reaction evidence="1">
        <text>[pyruvate, water dikinase]-phosphate + phosphate + H(+) = [pyruvate, water dikinase] + diphosphate</text>
        <dbReference type="Rhea" id="RHEA:48580"/>
        <dbReference type="Rhea" id="RHEA-COMP:11425"/>
        <dbReference type="Rhea" id="RHEA-COMP:11426"/>
        <dbReference type="ChEBI" id="CHEBI:15378"/>
        <dbReference type="ChEBI" id="CHEBI:33019"/>
        <dbReference type="ChEBI" id="CHEBI:43176"/>
        <dbReference type="ChEBI" id="CHEBI:43474"/>
        <dbReference type="ChEBI" id="CHEBI:68546"/>
        <dbReference type="EC" id="2.7.4.28"/>
    </reaction>
</comment>
<comment type="similarity">
    <text evidence="1">Belongs to the pyruvate, phosphate/water dikinase regulatory protein family. PSRP subfamily.</text>
</comment>
<proteinExistence type="inferred from homology"/>
<feature type="chain" id="PRO_0000196707" description="Phosphoenolpyruvate synthase regulatory protein">
    <location>
        <begin position="1"/>
        <end position="277"/>
    </location>
</feature>
<feature type="binding site" evidence="1">
    <location>
        <begin position="157"/>
        <end position="164"/>
    </location>
    <ligand>
        <name>ADP</name>
        <dbReference type="ChEBI" id="CHEBI:456216"/>
    </ligand>
</feature>
<reference key="1">
    <citation type="journal article" date="2001" name="Nature">
        <title>Complete genome sequence of a multiple drug resistant Salmonella enterica serovar Typhi CT18.</title>
        <authorList>
            <person name="Parkhill J."/>
            <person name="Dougan G."/>
            <person name="James K.D."/>
            <person name="Thomson N.R."/>
            <person name="Pickard D."/>
            <person name="Wain J."/>
            <person name="Churcher C.M."/>
            <person name="Mungall K.L."/>
            <person name="Bentley S.D."/>
            <person name="Holden M.T.G."/>
            <person name="Sebaihia M."/>
            <person name="Baker S."/>
            <person name="Basham D."/>
            <person name="Brooks K."/>
            <person name="Chillingworth T."/>
            <person name="Connerton P."/>
            <person name="Cronin A."/>
            <person name="Davis P."/>
            <person name="Davies R.M."/>
            <person name="Dowd L."/>
            <person name="White N."/>
            <person name="Farrar J."/>
            <person name="Feltwell T."/>
            <person name="Hamlin N."/>
            <person name="Haque A."/>
            <person name="Hien T.T."/>
            <person name="Holroyd S."/>
            <person name="Jagels K."/>
            <person name="Krogh A."/>
            <person name="Larsen T.S."/>
            <person name="Leather S."/>
            <person name="Moule S."/>
            <person name="O'Gaora P."/>
            <person name="Parry C."/>
            <person name="Quail M.A."/>
            <person name="Rutherford K.M."/>
            <person name="Simmonds M."/>
            <person name="Skelton J."/>
            <person name="Stevens K."/>
            <person name="Whitehead S."/>
            <person name="Barrell B.G."/>
        </authorList>
    </citation>
    <scope>NUCLEOTIDE SEQUENCE [LARGE SCALE GENOMIC DNA]</scope>
    <source>
        <strain>CT18</strain>
    </source>
</reference>
<reference key="2">
    <citation type="journal article" date="2003" name="J. Bacteriol.">
        <title>Comparative genomics of Salmonella enterica serovar Typhi strains Ty2 and CT18.</title>
        <authorList>
            <person name="Deng W."/>
            <person name="Liou S.-R."/>
            <person name="Plunkett G. III"/>
            <person name="Mayhew G.F."/>
            <person name="Rose D.J."/>
            <person name="Burland V."/>
            <person name="Kodoyianni V."/>
            <person name="Schwartz D.C."/>
            <person name="Blattner F.R."/>
        </authorList>
    </citation>
    <scope>NUCLEOTIDE SEQUENCE [LARGE SCALE GENOMIC DNA]</scope>
    <source>
        <strain>ATCC 700931 / Ty2</strain>
    </source>
</reference>
<protein>
    <recommendedName>
        <fullName evidence="1">Phosphoenolpyruvate synthase regulatory protein</fullName>
        <shortName evidence="1">PEP synthase regulatory protein</shortName>
        <shortName evidence="1">PSRP</shortName>
        <ecNumber evidence="1">2.7.11.33</ecNumber>
        <ecNumber evidence="1">2.7.4.28</ecNumber>
    </recommendedName>
    <alternativeName>
        <fullName evidence="1">Pyruvate, water dikinase regulatory protein</fullName>
    </alternativeName>
</protein>
<accession>P67198</accession>
<accession>Q8XG91</accession>
<name>PSRP_SALTI</name>
<sequence length="277" mass="31149">MDNVVDRHVFYISDGTAITAEVLGHAVMSQFPVTISSITLPFVENESRARAVKDQIDAIYQQTGVRPLVFYSIVLPEIRAIILQSEGFCQDIVQALVAPLQQEMKLDPTPIAHRTHGLNPGNLNKYDARIAAIDYTLAHDDGISLRNLDQAQVILLGVSRCGKTPTSLYLAMQFGIRAANYPFIADDMDNLTLPTSLKPLQHKLFGLTIDPERLAAIREERRENSRYASLRQCRMEVAEVEALYRKNQIPCLNSTNYSVEEIATKILDIMGLNRRMY</sequence>
<keyword id="KW-0418">Kinase</keyword>
<keyword id="KW-0547">Nucleotide-binding</keyword>
<keyword id="KW-0723">Serine/threonine-protein kinase</keyword>
<keyword id="KW-0808">Transferase</keyword>
<organism>
    <name type="scientific">Salmonella typhi</name>
    <dbReference type="NCBI Taxonomy" id="90370"/>
    <lineage>
        <taxon>Bacteria</taxon>
        <taxon>Pseudomonadati</taxon>
        <taxon>Pseudomonadota</taxon>
        <taxon>Gammaproteobacteria</taxon>
        <taxon>Enterobacterales</taxon>
        <taxon>Enterobacteriaceae</taxon>
        <taxon>Salmonella</taxon>
    </lineage>
</organism>